<gene>
    <name evidence="1" type="primary">uppP</name>
    <name type="ordered locus">GK0218</name>
</gene>
<feature type="chain" id="PRO_0000151153" description="Undecaprenyl-diphosphatase">
    <location>
        <begin position="1"/>
        <end position="273"/>
    </location>
</feature>
<feature type="transmembrane region" description="Helical" evidence="1">
    <location>
        <begin position="4"/>
        <end position="24"/>
    </location>
</feature>
<feature type="transmembrane region" description="Helical" evidence="1">
    <location>
        <begin position="48"/>
        <end position="68"/>
    </location>
</feature>
<feature type="transmembrane region" description="Helical" evidence="1">
    <location>
        <begin position="89"/>
        <end position="109"/>
    </location>
</feature>
<feature type="transmembrane region" description="Helical" evidence="1">
    <location>
        <begin position="116"/>
        <end position="136"/>
    </location>
</feature>
<feature type="transmembrane region" description="Helical" evidence="1">
    <location>
        <begin position="152"/>
        <end position="172"/>
    </location>
</feature>
<feature type="transmembrane region" description="Helical" evidence="1">
    <location>
        <begin position="193"/>
        <end position="213"/>
    </location>
</feature>
<feature type="transmembrane region" description="Helical" evidence="1">
    <location>
        <begin position="222"/>
        <end position="242"/>
    </location>
</feature>
<feature type="transmembrane region" description="Helical" evidence="1">
    <location>
        <begin position="252"/>
        <end position="272"/>
    </location>
</feature>
<organism>
    <name type="scientific">Geobacillus kaustophilus (strain HTA426)</name>
    <dbReference type="NCBI Taxonomy" id="235909"/>
    <lineage>
        <taxon>Bacteria</taxon>
        <taxon>Bacillati</taxon>
        <taxon>Bacillota</taxon>
        <taxon>Bacilli</taxon>
        <taxon>Bacillales</taxon>
        <taxon>Anoxybacillaceae</taxon>
        <taxon>Geobacillus</taxon>
        <taxon>Geobacillus thermoleovorans group</taxon>
    </lineage>
</organism>
<proteinExistence type="inferred from homology"/>
<keyword id="KW-0046">Antibiotic resistance</keyword>
<keyword id="KW-1003">Cell membrane</keyword>
<keyword id="KW-0133">Cell shape</keyword>
<keyword id="KW-0961">Cell wall biogenesis/degradation</keyword>
<keyword id="KW-0378">Hydrolase</keyword>
<keyword id="KW-0472">Membrane</keyword>
<keyword id="KW-0573">Peptidoglycan synthesis</keyword>
<keyword id="KW-1185">Reference proteome</keyword>
<keyword id="KW-0812">Transmembrane</keyword>
<keyword id="KW-1133">Transmembrane helix</keyword>
<reference key="1">
    <citation type="journal article" date="2004" name="Nucleic Acids Res.">
        <title>Thermoadaptation trait revealed by the genome sequence of thermophilic Geobacillus kaustophilus.</title>
        <authorList>
            <person name="Takami H."/>
            <person name="Takaki Y."/>
            <person name="Chee G.-J."/>
            <person name="Nishi S."/>
            <person name="Shimamura S."/>
            <person name="Suzuki H."/>
            <person name="Matsui S."/>
            <person name="Uchiyama I."/>
        </authorList>
    </citation>
    <scope>NUCLEOTIDE SEQUENCE [LARGE SCALE GENOMIC DNA]</scope>
    <source>
        <strain>HTA426</strain>
    </source>
</reference>
<protein>
    <recommendedName>
        <fullName evidence="1">Undecaprenyl-diphosphatase</fullName>
        <ecNumber evidence="1">3.6.1.27</ecNumber>
    </recommendedName>
    <alternativeName>
        <fullName evidence="1">Bacitracin resistance protein</fullName>
    </alternativeName>
    <alternativeName>
        <fullName evidence="1">Undecaprenyl pyrophosphate phosphatase</fullName>
    </alternativeName>
</protein>
<comment type="function">
    <text evidence="1">Catalyzes the dephosphorylation of undecaprenyl diphosphate (UPP). Confers resistance to bacitracin.</text>
</comment>
<comment type="catalytic activity">
    <reaction evidence="1">
        <text>di-trans,octa-cis-undecaprenyl diphosphate + H2O = di-trans,octa-cis-undecaprenyl phosphate + phosphate + H(+)</text>
        <dbReference type="Rhea" id="RHEA:28094"/>
        <dbReference type="ChEBI" id="CHEBI:15377"/>
        <dbReference type="ChEBI" id="CHEBI:15378"/>
        <dbReference type="ChEBI" id="CHEBI:43474"/>
        <dbReference type="ChEBI" id="CHEBI:58405"/>
        <dbReference type="ChEBI" id="CHEBI:60392"/>
        <dbReference type="EC" id="3.6.1.27"/>
    </reaction>
</comment>
<comment type="subcellular location">
    <subcellularLocation>
        <location evidence="1">Cell membrane</location>
        <topology evidence="1">Multi-pass membrane protein</topology>
    </subcellularLocation>
</comment>
<comment type="miscellaneous">
    <text>Bacitracin is thought to be involved in the inhibition of peptidoglycan synthesis by sequestering undecaprenyl diphosphate, thereby reducing the pool of lipid carrier available.</text>
</comment>
<comment type="similarity">
    <text evidence="1">Belongs to the UppP family.</text>
</comment>
<accession>Q5L3H7</accession>
<dbReference type="EC" id="3.6.1.27" evidence="1"/>
<dbReference type="EMBL" id="BA000043">
    <property type="protein sequence ID" value="BAD74503.1"/>
    <property type="molecule type" value="Genomic_DNA"/>
</dbReference>
<dbReference type="RefSeq" id="WP_011229728.1">
    <property type="nucleotide sequence ID" value="NC_006510.1"/>
</dbReference>
<dbReference type="SMR" id="Q5L3H7"/>
<dbReference type="STRING" id="235909.GK0218"/>
<dbReference type="KEGG" id="gka:GK0218"/>
<dbReference type="PATRIC" id="fig|235909.7.peg.278"/>
<dbReference type="eggNOG" id="COG1968">
    <property type="taxonomic scope" value="Bacteria"/>
</dbReference>
<dbReference type="HOGENOM" id="CLU_060296_2_0_9"/>
<dbReference type="Proteomes" id="UP000001172">
    <property type="component" value="Chromosome"/>
</dbReference>
<dbReference type="GO" id="GO:0005886">
    <property type="term" value="C:plasma membrane"/>
    <property type="evidence" value="ECO:0007669"/>
    <property type="project" value="UniProtKB-SubCell"/>
</dbReference>
<dbReference type="GO" id="GO:0050380">
    <property type="term" value="F:undecaprenyl-diphosphatase activity"/>
    <property type="evidence" value="ECO:0007669"/>
    <property type="project" value="UniProtKB-UniRule"/>
</dbReference>
<dbReference type="GO" id="GO:0071555">
    <property type="term" value="P:cell wall organization"/>
    <property type="evidence" value="ECO:0007669"/>
    <property type="project" value="UniProtKB-KW"/>
</dbReference>
<dbReference type="GO" id="GO:0009252">
    <property type="term" value="P:peptidoglycan biosynthetic process"/>
    <property type="evidence" value="ECO:0007669"/>
    <property type="project" value="UniProtKB-KW"/>
</dbReference>
<dbReference type="GO" id="GO:0008360">
    <property type="term" value="P:regulation of cell shape"/>
    <property type="evidence" value="ECO:0007669"/>
    <property type="project" value="UniProtKB-KW"/>
</dbReference>
<dbReference type="GO" id="GO:0046677">
    <property type="term" value="P:response to antibiotic"/>
    <property type="evidence" value="ECO:0007669"/>
    <property type="project" value="UniProtKB-UniRule"/>
</dbReference>
<dbReference type="HAMAP" id="MF_01006">
    <property type="entry name" value="Undec_diphosphatase"/>
    <property type="match status" value="1"/>
</dbReference>
<dbReference type="InterPro" id="IPR003824">
    <property type="entry name" value="UppP"/>
</dbReference>
<dbReference type="NCBIfam" id="NF001390">
    <property type="entry name" value="PRK00281.1-4"/>
    <property type="match status" value="1"/>
</dbReference>
<dbReference type="NCBIfam" id="TIGR00753">
    <property type="entry name" value="undec_PP_bacA"/>
    <property type="match status" value="1"/>
</dbReference>
<dbReference type="PANTHER" id="PTHR30622">
    <property type="entry name" value="UNDECAPRENYL-DIPHOSPHATASE"/>
    <property type="match status" value="1"/>
</dbReference>
<dbReference type="PANTHER" id="PTHR30622:SF3">
    <property type="entry name" value="UNDECAPRENYL-DIPHOSPHATASE"/>
    <property type="match status" value="1"/>
</dbReference>
<dbReference type="Pfam" id="PF02673">
    <property type="entry name" value="BacA"/>
    <property type="match status" value="1"/>
</dbReference>
<evidence type="ECO:0000255" key="1">
    <source>
        <dbReference type="HAMAP-Rule" id="MF_01006"/>
    </source>
</evidence>
<name>UPPP_GEOKA</name>
<sequence length="273" mass="30172">MHWMELWKAIILGMVEGLTEFAPVSSTGHMIMVDDLWLKSTEFLGKYAANTFKVVIQLGSILAAVVVFKDRFLDLLGVRGRHPGGHPRLNLIHVIIGLLPAGVLGVLFEDYIDEHLFSTKTVLIGLVLGALLMIAADKFAKKAARTQTVDQITYKQAFFVGLMQCLSLWPGFSRSGSTISGGVLVGMSHRAAADFTFIMAVPIMAGASGLSLLKNWQYVTAADIPFFIAGFFSAFVFALLAIRFFLELINRIRLVPFAVYRIVLAVVIYFLYF</sequence>